<comment type="function">
    <text evidence="3 7">Involved in vacuolar processing and morphology.</text>
</comment>
<comment type="subcellular location">
    <subcellularLocation>
        <location evidence="4">Nucleus</location>
    </subcellularLocation>
</comment>
<comment type="disruption phenotype">
    <text evidence="6 7">Exhibits cold sensitivity, a significant increase in cells with fragmented vacuoles, internal accumulation of precursor CPY, increased glycogen accumulation, and displays elongated buds.</text>
</comment>
<comment type="miscellaneous">
    <text evidence="5">Present with 1050 molecules/cell in log phase SD medium.</text>
</comment>
<comment type="similarity">
    <text evidence="8">Belongs to the VID22 family.</text>
</comment>
<dbReference type="EMBL" id="Z72856">
    <property type="protein sequence ID" value="CAA97073.1"/>
    <property type="molecule type" value="Genomic_DNA"/>
</dbReference>
<dbReference type="EMBL" id="BK006941">
    <property type="protein sequence ID" value="DAA08165.1"/>
    <property type="molecule type" value="Genomic_DNA"/>
</dbReference>
<dbReference type="PIR" id="S64366">
    <property type="entry name" value="S64366"/>
</dbReference>
<dbReference type="RefSeq" id="NP_011585.3">
    <property type="nucleotide sequence ID" value="NM_001181200.3"/>
</dbReference>
<dbReference type="BioGRID" id="33314">
    <property type="interactions" value="117"/>
</dbReference>
<dbReference type="DIP" id="DIP-5521N"/>
<dbReference type="FunCoup" id="P53246">
    <property type="interactions" value="106"/>
</dbReference>
<dbReference type="IntAct" id="P53246">
    <property type="interactions" value="9"/>
</dbReference>
<dbReference type="MINT" id="P53246"/>
<dbReference type="STRING" id="4932.YGR071C"/>
<dbReference type="iPTMnet" id="P53246"/>
<dbReference type="PaxDb" id="4932-YGR071C"/>
<dbReference type="PeptideAtlas" id="P53246"/>
<dbReference type="EnsemblFungi" id="YGR071C_mRNA">
    <property type="protein sequence ID" value="YGR071C"/>
    <property type="gene ID" value="YGR071C"/>
</dbReference>
<dbReference type="GeneID" id="852962"/>
<dbReference type="KEGG" id="sce:YGR071C"/>
<dbReference type="AGR" id="SGD:S000003303"/>
<dbReference type="SGD" id="S000003303">
    <property type="gene designation" value="ENV11"/>
</dbReference>
<dbReference type="VEuPathDB" id="FungiDB:YGR071C"/>
<dbReference type="eggNOG" id="ENOG502RKC9">
    <property type="taxonomic scope" value="Eukaryota"/>
</dbReference>
<dbReference type="GeneTree" id="ENSGT00940000176412"/>
<dbReference type="HOGENOM" id="CLU_008135_0_0_1"/>
<dbReference type="InParanoid" id="P53246"/>
<dbReference type="OMA" id="TKVKCKH"/>
<dbReference type="OrthoDB" id="4067948at2759"/>
<dbReference type="BioCyc" id="YEAST:G3O-30784-MONOMER"/>
<dbReference type="BioGRID-ORCS" id="852962">
    <property type="hits" value="0 hits in 10 CRISPR screens"/>
</dbReference>
<dbReference type="PRO" id="PR:P53246"/>
<dbReference type="Proteomes" id="UP000002311">
    <property type="component" value="Chromosome VII"/>
</dbReference>
<dbReference type="RNAct" id="P53246">
    <property type="molecule type" value="protein"/>
</dbReference>
<dbReference type="GO" id="GO:0005634">
    <property type="term" value="C:nucleus"/>
    <property type="evidence" value="ECO:0007005"/>
    <property type="project" value="SGD"/>
</dbReference>
<dbReference type="GO" id="GO:0005773">
    <property type="term" value="C:vacuole"/>
    <property type="evidence" value="ECO:0007669"/>
    <property type="project" value="GOC"/>
</dbReference>
<dbReference type="GO" id="GO:0003677">
    <property type="term" value="F:DNA binding"/>
    <property type="evidence" value="ECO:0007669"/>
    <property type="project" value="InterPro"/>
</dbReference>
<dbReference type="GO" id="GO:0008270">
    <property type="term" value="F:zinc ion binding"/>
    <property type="evidence" value="ECO:0007669"/>
    <property type="project" value="UniProtKB-KW"/>
</dbReference>
<dbReference type="GO" id="GO:0006357">
    <property type="term" value="P:regulation of transcription by RNA polymerase II"/>
    <property type="evidence" value="ECO:0000318"/>
    <property type="project" value="GO_Central"/>
</dbReference>
<dbReference type="GO" id="GO:0006624">
    <property type="term" value="P:vacuolar protein processing"/>
    <property type="evidence" value="ECO:0000315"/>
    <property type="project" value="SGD"/>
</dbReference>
<dbReference type="GO" id="GO:0007033">
    <property type="term" value="P:vacuole organization"/>
    <property type="evidence" value="ECO:0000315"/>
    <property type="project" value="SGD"/>
</dbReference>
<dbReference type="InterPro" id="IPR003656">
    <property type="entry name" value="Znf_BED"/>
</dbReference>
<dbReference type="Pfam" id="PF02892">
    <property type="entry name" value="zf-BED"/>
    <property type="match status" value="1"/>
</dbReference>
<dbReference type="SMART" id="SM00614">
    <property type="entry name" value="ZnF_BED"/>
    <property type="match status" value="1"/>
</dbReference>
<dbReference type="PROSITE" id="PS50808">
    <property type="entry name" value="ZF_BED"/>
    <property type="match status" value="1"/>
</dbReference>
<gene>
    <name type="primary">ENV11</name>
    <name type="ordered locus">YGR071C</name>
</gene>
<accession>P53246</accession>
<accession>D6VUK4</accession>
<feature type="chain" id="PRO_0000202806" description="Late endosome and vacuole interface protein 11">
    <location>
        <begin position="1"/>
        <end position="860"/>
    </location>
</feature>
<feature type="zinc finger region" description="BED-type" evidence="1">
    <location>
        <begin position="84"/>
        <end position="138"/>
    </location>
</feature>
<feature type="region of interest" description="Disordered" evidence="2">
    <location>
        <begin position="19"/>
        <end position="45"/>
    </location>
</feature>
<feature type="compositionally biased region" description="Low complexity" evidence="2">
    <location>
        <begin position="20"/>
        <end position="31"/>
    </location>
</feature>
<feature type="compositionally biased region" description="Acidic residues" evidence="2">
    <location>
        <begin position="35"/>
        <end position="45"/>
    </location>
</feature>
<feature type="binding site" evidence="1">
    <location>
        <position position="105"/>
    </location>
    <ligand>
        <name>Zn(2+)</name>
        <dbReference type="ChEBI" id="CHEBI:29105"/>
    </ligand>
</feature>
<feature type="binding site" evidence="1">
    <location>
        <position position="108"/>
    </location>
    <ligand>
        <name>Zn(2+)</name>
        <dbReference type="ChEBI" id="CHEBI:29105"/>
    </ligand>
</feature>
<feature type="binding site" evidence="1">
    <location>
        <position position="126"/>
    </location>
    <ligand>
        <name>Zn(2+)</name>
        <dbReference type="ChEBI" id="CHEBI:29105"/>
    </ligand>
</feature>
<feature type="binding site" evidence="1">
    <location>
        <position position="131"/>
    </location>
    <ligand>
        <name>Zn(2+)</name>
        <dbReference type="ChEBI" id="CHEBI:29105"/>
    </ligand>
</feature>
<protein>
    <recommendedName>
        <fullName>Late endosome and vacuole interface protein 11</fullName>
    </recommendedName>
</protein>
<keyword id="KW-0479">Metal-binding</keyword>
<keyword id="KW-0539">Nucleus</keyword>
<keyword id="KW-1185">Reference proteome</keyword>
<keyword id="KW-0862">Zinc</keyword>
<keyword id="KW-0863">Zinc-finger</keyword>
<reference key="1">
    <citation type="journal article" date="1997" name="Nature">
        <title>The nucleotide sequence of Saccharomyces cerevisiae chromosome VII.</title>
        <authorList>
            <person name="Tettelin H."/>
            <person name="Agostoni-Carbone M.L."/>
            <person name="Albermann K."/>
            <person name="Albers M."/>
            <person name="Arroyo J."/>
            <person name="Backes U."/>
            <person name="Barreiros T."/>
            <person name="Bertani I."/>
            <person name="Bjourson A.J."/>
            <person name="Brueckner M."/>
            <person name="Bruschi C.V."/>
            <person name="Carignani G."/>
            <person name="Castagnoli L."/>
            <person name="Cerdan E."/>
            <person name="Clemente M.L."/>
            <person name="Coblenz A."/>
            <person name="Coglievina M."/>
            <person name="Coissac E."/>
            <person name="Defoor E."/>
            <person name="Del Bino S."/>
            <person name="Delius H."/>
            <person name="Delneri D."/>
            <person name="de Wergifosse P."/>
            <person name="Dujon B."/>
            <person name="Durand P."/>
            <person name="Entian K.-D."/>
            <person name="Eraso P."/>
            <person name="Escribano V."/>
            <person name="Fabiani L."/>
            <person name="Fartmann B."/>
            <person name="Feroli F."/>
            <person name="Feuermann M."/>
            <person name="Frontali L."/>
            <person name="Garcia-Gonzalez M."/>
            <person name="Garcia-Saez M.I."/>
            <person name="Goffeau A."/>
            <person name="Guerreiro P."/>
            <person name="Hani J."/>
            <person name="Hansen M."/>
            <person name="Hebling U."/>
            <person name="Hernandez K."/>
            <person name="Heumann K."/>
            <person name="Hilger F."/>
            <person name="Hofmann B."/>
            <person name="Indge K.J."/>
            <person name="James C.M."/>
            <person name="Klima R."/>
            <person name="Koetter P."/>
            <person name="Kramer B."/>
            <person name="Kramer W."/>
            <person name="Lauquin G."/>
            <person name="Leuther H."/>
            <person name="Louis E.J."/>
            <person name="Maillier E."/>
            <person name="Marconi A."/>
            <person name="Martegani E."/>
            <person name="Mazon M.J."/>
            <person name="Mazzoni C."/>
            <person name="McReynolds A.D.K."/>
            <person name="Melchioretto P."/>
            <person name="Mewes H.-W."/>
            <person name="Minenkova O."/>
            <person name="Mueller-Auer S."/>
            <person name="Nawrocki A."/>
            <person name="Netter P."/>
            <person name="Neu R."/>
            <person name="Nombela C."/>
            <person name="Oliver S.G."/>
            <person name="Panzeri L."/>
            <person name="Paoluzi S."/>
            <person name="Plevani P."/>
            <person name="Portetelle D."/>
            <person name="Portillo F."/>
            <person name="Potier S."/>
            <person name="Purnelle B."/>
            <person name="Rieger M."/>
            <person name="Riles L."/>
            <person name="Rinaldi T."/>
            <person name="Robben J."/>
            <person name="Rodrigues-Pousada C."/>
            <person name="Rodriguez-Belmonte E."/>
            <person name="Rodriguez-Torres A.M."/>
            <person name="Rose M."/>
            <person name="Ruzzi M."/>
            <person name="Saliola M."/>
            <person name="Sanchez-Perez M."/>
            <person name="Schaefer B."/>
            <person name="Schaefer M."/>
            <person name="Scharfe M."/>
            <person name="Schmidheini T."/>
            <person name="Schreer A."/>
            <person name="Skala J."/>
            <person name="Souciet J.-L."/>
            <person name="Steensma H.Y."/>
            <person name="Talla E."/>
            <person name="Thierry A."/>
            <person name="Vandenbol M."/>
            <person name="van der Aart Q.J.M."/>
            <person name="Van Dyck L."/>
            <person name="Vanoni M."/>
            <person name="Verhasselt P."/>
            <person name="Voet M."/>
            <person name="Volckaert G."/>
            <person name="Wambutt R."/>
            <person name="Watson M.D."/>
            <person name="Weber N."/>
            <person name="Wedler E."/>
            <person name="Wedler H."/>
            <person name="Wipfli P."/>
            <person name="Wolf K."/>
            <person name="Wright L.F."/>
            <person name="Zaccaria P."/>
            <person name="Zimmermann M."/>
            <person name="Zollner A."/>
            <person name="Kleine K."/>
        </authorList>
    </citation>
    <scope>NUCLEOTIDE SEQUENCE [LARGE SCALE GENOMIC DNA]</scope>
    <source>
        <strain>ATCC 204508 / S288c</strain>
    </source>
</reference>
<reference key="2">
    <citation type="journal article" date="2014" name="G3 (Bethesda)">
        <title>The reference genome sequence of Saccharomyces cerevisiae: Then and now.</title>
        <authorList>
            <person name="Engel S.R."/>
            <person name="Dietrich F.S."/>
            <person name="Fisk D.G."/>
            <person name="Binkley G."/>
            <person name="Balakrishnan R."/>
            <person name="Costanzo M.C."/>
            <person name="Dwight S.S."/>
            <person name="Hitz B.C."/>
            <person name="Karra K."/>
            <person name="Nash R.S."/>
            <person name="Weng S."/>
            <person name="Wong E.D."/>
            <person name="Lloyd P."/>
            <person name="Skrzypek M.S."/>
            <person name="Miyasato S.R."/>
            <person name="Simison M."/>
            <person name="Cherry J.M."/>
        </authorList>
    </citation>
    <scope>GENOME REANNOTATION</scope>
    <source>
        <strain>ATCC 204508 / S288c</strain>
    </source>
</reference>
<reference key="3">
    <citation type="journal article" date="2002" name="Mol. Cell. Proteomics">
        <title>Systematic identification of the genes affecting glycogen storage in the yeast Saccharomyces cerevisiae: implication of the vacuole as a determinant of glycogen level.</title>
        <authorList>
            <person name="Wilson W.A."/>
            <person name="Wang Z."/>
            <person name="Roach P.J."/>
        </authorList>
    </citation>
    <scope>FUNCTION</scope>
</reference>
<reference key="4">
    <citation type="journal article" date="2003" name="Nature">
        <title>Global analysis of protein localization in budding yeast.</title>
        <authorList>
            <person name="Huh W.-K."/>
            <person name="Falvo J.V."/>
            <person name="Gerke L.C."/>
            <person name="Carroll A.S."/>
            <person name="Howson R.W."/>
            <person name="Weissman J.S."/>
            <person name="O'Shea E.K."/>
        </authorList>
    </citation>
    <scope>SUBCELLULAR LOCATION [LARGE SCALE ANALYSIS]</scope>
</reference>
<reference key="5">
    <citation type="journal article" date="2003" name="Nature">
        <title>Global analysis of protein expression in yeast.</title>
        <authorList>
            <person name="Ghaemmaghami S."/>
            <person name="Huh W.-K."/>
            <person name="Bower K."/>
            <person name="Howson R.W."/>
            <person name="Belle A."/>
            <person name="Dephoure N."/>
            <person name="O'Shea E.K."/>
            <person name="Weissman J.S."/>
        </authorList>
    </citation>
    <scope>LEVEL OF PROTEIN EXPRESSION [LARGE SCALE ANALYSIS]</scope>
</reference>
<reference key="6">
    <citation type="journal article" date="2009" name="Curr. Genet.">
        <title>Comprehensive and quantitative analysis of yeast deletion mutants defective in apical and isotropic bud growth.</title>
        <authorList>
            <person name="Watanabe M."/>
            <person name="Watanabe D."/>
            <person name="Nogami S."/>
            <person name="Morishita S."/>
            <person name="Ohya Y."/>
        </authorList>
    </citation>
    <scope>DISRUPTION PHENOTYPE</scope>
</reference>
<reference key="7">
    <citation type="journal article" date="2011" name="PLoS ONE">
        <title>A genome-wide immunodetection screen in S. cerevisiae uncovers novel genes involved in lysosomal vacuole function and morphology.</title>
        <authorList>
            <person name="Ricarte F."/>
            <person name="Menjivar R."/>
            <person name="Chhun S."/>
            <person name="Soreta T."/>
            <person name="Oliveira L."/>
            <person name="Hsueh T."/>
            <person name="Serranilla M."/>
            <person name="Gharakhanian E."/>
        </authorList>
    </citation>
    <scope>DISRUPTION PHENOTYPE</scope>
    <scope>FUNCTION</scope>
</reference>
<organism>
    <name type="scientific">Saccharomyces cerevisiae (strain ATCC 204508 / S288c)</name>
    <name type="common">Baker's yeast</name>
    <dbReference type="NCBI Taxonomy" id="559292"/>
    <lineage>
        <taxon>Eukaryota</taxon>
        <taxon>Fungi</taxon>
        <taxon>Dikarya</taxon>
        <taxon>Ascomycota</taxon>
        <taxon>Saccharomycotina</taxon>
        <taxon>Saccharomycetes</taxon>
        <taxon>Saccharomycetales</taxon>
        <taxon>Saccharomycetaceae</taxon>
        <taxon>Saccharomyces</taxon>
    </lineage>
</organism>
<name>ENV11_YEAST</name>
<evidence type="ECO:0000255" key="1">
    <source>
        <dbReference type="PROSITE-ProRule" id="PRU00027"/>
    </source>
</evidence>
<evidence type="ECO:0000256" key="2">
    <source>
        <dbReference type="SAM" id="MobiDB-lite"/>
    </source>
</evidence>
<evidence type="ECO:0000269" key="3">
    <source>
    </source>
</evidence>
<evidence type="ECO:0000269" key="4">
    <source>
    </source>
</evidence>
<evidence type="ECO:0000269" key="5">
    <source>
    </source>
</evidence>
<evidence type="ECO:0000269" key="6">
    <source>
    </source>
</evidence>
<evidence type="ECO:0000269" key="7">
    <source>
    </source>
</evidence>
<evidence type="ECO:0000305" key="8"/>
<proteinExistence type="evidence at protein level"/>
<sequence length="860" mass="98109">MNTALDDLHGDLVTLEDNEIINNSDHSSSHSTSHEEEDEEEDDTEDIELIEKDGNKILSSRIHPEDEIINDGLNIWIPVQMLKKNIAKFWSHFLAIEKKLTKVKCKHCGEILTRSDASLTKTFRSHLKTKHNISANKNFYSMNFTVGDSNLKNNTSSTEITRRHGYDSLTFNSDQSFKCFDIGKLQSSNYLSISQLVAIVIASENLPLNFFENVSFKSLLSKFHRIPPLTTNIIEESIIGLSKSIDELIRRSISRNDTQLPFTIHLSDSKESNQPLYLKYSREIRAQLSNLDLSHLISVNFTELAGKRSLFSLQLFDNTNKVSKGLPLSIFVRKTTDIDISVWQEQLNNLYSKYPGLQKSVISITLPQSHYTMVLENRNSHNFTFHSGSVREIKYHTCIVSELLHCFLQPLFNVPTESMLSSFSVAKENHSGGSLLDSLIDFSHIDLSSTILGKICCLIEEVNLNDSLKSDFLLYCQNYTQPNCNELTSILSCNCDRFSALKSILEKFANLVPFFKSINSHLENESLSESDFRLINTVEETLRTFEQSIEYFASSAPLKFTHTLVFIIKFELYLTEIIRSFKFTKSKKPFEKILARLLKVKDLYLLDDVNLIGAFLYPSIFQSKSLLNEIFGTTSVNKIVHNMTKIVLRYLKNFINITNFRSSNSGGESGRNSGNNLLSDYEAIFMKESRDVELLCNTKLTAPLTEDSLLVQIIRDDLLRYVNRIAHELPNAYHDYLNDNDISFDGSHFTKHELSEENDSNSGEWCLNPMEETFDIHIPISDSIWNNYISSKNKIEVIDILLQLLSVNSTSSIRSELSSLTANQDFSTKLSEETIKIKLLNSQFNLEKINFHSGSIFDAC</sequence>